<sequence>MAANPRKILVTCALPYANGSIHLGHMLEHVQADIWVRYQRLRGNEVHFICADDAHGTPIMLKAQQMGMEPEQMIEEVSKEHQADFAGFDISFDNYHSTHSDENRELASFVYTQLKDKGYITNRTISQLFDPEKEMFLPDRFVKGTCPKCKAEDQYGDNCDNCGETYSPTDLIDPKSAVSGATPIMKDSEHFFFDLPQFEDMLKAWTKSGALQTETSNKMQEWFESGLHQWDISRDAPYFGFEIPGETSKYFYVWLDAPIGYMGSFKNLCDKRDDLDFDEFWKKDSTTELYHFIGKDIVYFHSLFWPAMLEGAGFRKPNNVFVHGYVTVNGAKMSKSKGTFIKAGTYLEHLDPECLRYYYAAKLNSRIDDLDLNLEDFTQRVNSDVVNKIVNLASRNAGFITKRFDGKLSETFAEPELYAEFANAADRIAELYETREFSRAIREITALADKANQYIDEKAPWVVAKQEGKDQELQDICSVGINLFRVLITYLKPVMPLLTERTEAFLNETLTWEGVAQPLTNHEVTKFKALFTRIDPKHVEAMVEASKEDAAAAQVLIEAAKPTGPLIDEPIEAEIEFDDFAKVDMRIAKIISCEAVPKANKLLKFQLDIGGEMRQVFSGIKSAYTPEELVGKHTVMVANLKPRKMKFGMSEGMILAAGPGGKDLWILEPHEGAQPGMRVM</sequence>
<protein>
    <recommendedName>
        <fullName evidence="1">Methionine--tRNA ligase</fullName>
        <ecNumber evidence="1">6.1.1.10</ecNumber>
    </recommendedName>
    <alternativeName>
        <fullName evidence="1">Methionyl-tRNA synthetase</fullName>
        <shortName evidence="1">MetRS</shortName>
    </alternativeName>
</protein>
<name>SYM_PHOPR</name>
<keyword id="KW-0030">Aminoacyl-tRNA synthetase</keyword>
<keyword id="KW-0067">ATP-binding</keyword>
<keyword id="KW-0963">Cytoplasm</keyword>
<keyword id="KW-0436">Ligase</keyword>
<keyword id="KW-0479">Metal-binding</keyword>
<keyword id="KW-0547">Nucleotide-binding</keyword>
<keyword id="KW-0648">Protein biosynthesis</keyword>
<keyword id="KW-1185">Reference proteome</keyword>
<keyword id="KW-0694">RNA-binding</keyword>
<keyword id="KW-0820">tRNA-binding</keyword>
<keyword id="KW-0862">Zinc</keyword>
<reference key="1">
    <citation type="journal article" date="2005" name="Science">
        <title>Life at depth: Photobacterium profundum genome sequence and expression analysis.</title>
        <authorList>
            <person name="Vezzi A."/>
            <person name="Campanaro S."/>
            <person name="D'Angelo M."/>
            <person name="Simonato F."/>
            <person name="Vitulo N."/>
            <person name="Lauro F.M."/>
            <person name="Cestaro A."/>
            <person name="Malacrida G."/>
            <person name="Simionati B."/>
            <person name="Cannata N."/>
            <person name="Romualdi C."/>
            <person name="Bartlett D.H."/>
            <person name="Valle G."/>
        </authorList>
    </citation>
    <scope>NUCLEOTIDE SEQUENCE [LARGE SCALE GENOMIC DNA]</scope>
    <source>
        <strain>ATCC BAA-1253 / SS9</strain>
    </source>
</reference>
<gene>
    <name evidence="1" type="primary">metG</name>
    <name type="ordered locus">PBPRA1168</name>
</gene>
<comment type="function">
    <text evidence="1">Is required not only for elongation of protein synthesis but also for the initiation of all mRNA translation through initiator tRNA(fMet) aminoacylation.</text>
</comment>
<comment type="catalytic activity">
    <reaction evidence="1">
        <text>tRNA(Met) + L-methionine + ATP = L-methionyl-tRNA(Met) + AMP + diphosphate</text>
        <dbReference type="Rhea" id="RHEA:13481"/>
        <dbReference type="Rhea" id="RHEA-COMP:9667"/>
        <dbReference type="Rhea" id="RHEA-COMP:9698"/>
        <dbReference type="ChEBI" id="CHEBI:30616"/>
        <dbReference type="ChEBI" id="CHEBI:33019"/>
        <dbReference type="ChEBI" id="CHEBI:57844"/>
        <dbReference type="ChEBI" id="CHEBI:78442"/>
        <dbReference type="ChEBI" id="CHEBI:78530"/>
        <dbReference type="ChEBI" id="CHEBI:456215"/>
        <dbReference type="EC" id="6.1.1.10"/>
    </reaction>
</comment>
<comment type="cofactor">
    <cofactor evidence="1">
        <name>Zn(2+)</name>
        <dbReference type="ChEBI" id="CHEBI:29105"/>
    </cofactor>
    <text evidence="1">Binds 1 zinc ion per subunit.</text>
</comment>
<comment type="subunit">
    <text evidence="1">Homodimer.</text>
</comment>
<comment type="subcellular location">
    <subcellularLocation>
        <location evidence="1">Cytoplasm</location>
    </subcellularLocation>
</comment>
<comment type="similarity">
    <text evidence="1">Belongs to the class-I aminoacyl-tRNA synthetase family. MetG type 1 subfamily.</text>
</comment>
<dbReference type="EC" id="6.1.1.10" evidence="1"/>
<dbReference type="EMBL" id="CR378666">
    <property type="protein sequence ID" value="CAG19579.1"/>
    <property type="molecule type" value="Genomic_DNA"/>
</dbReference>
<dbReference type="RefSeq" id="WP_011217910.1">
    <property type="nucleotide sequence ID" value="NC_006370.1"/>
</dbReference>
<dbReference type="SMR" id="Q6LSZ7"/>
<dbReference type="STRING" id="298386.PBPRA1168"/>
<dbReference type="KEGG" id="ppr:PBPRA1168"/>
<dbReference type="eggNOG" id="COG0073">
    <property type="taxonomic scope" value="Bacteria"/>
</dbReference>
<dbReference type="eggNOG" id="COG0143">
    <property type="taxonomic scope" value="Bacteria"/>
</dbReference>
<dbReference type="HOGENOM" id="CLU_009710_7_0_6"/>
<dbReference type="Proteomes" id="UP000000593">
    <property type="component" value="Chromosome 1"/>
</dbReference>
<dbReference type="GO" id="GO:0005829">
    <property type="term" value="C:cytosol"/>
    <property type="evidence" value="ECO:0007669"/>
    <property type="project" value="TreeGrafter"/>
</dbReference>
<dbReference type="GO" id="GO:0005524">
    <property type="term" value="F:ATP binding"/>
    <property type="evidence" value="ECO:0007669"/>
    <property type="project" value="UniProtKB-UniRule"/>
</dbReference>
<dbReference type="GO" id="GO:0046872">
    <property type="term" value="F:metal ion binding"/>
    <property type="evidence" value="ECO:0007669"/>
    <property type="project" value="UniProtKB-KW"/>
</dbReference>
<dbReference type="GO" id="GO:0004825">
    <property type="term" value="F:methionine-tRNA ligase activity"/>
    <property type="evidence" value="ECO:0007669"/>
    <property type="project" value="UniProtKB-UniRule"/>
</dbReference>
<dbReference type="GO" id="GO:0000049">
    <property type="term" value="F:tRNA binding"/>
    <property type="evidence" value="ECO:0007669"/>
    <property type="project" value="UniProtKB-KW"/>
</dbReference>
<dbReference type="GO" id="GO:0006431">
    <property type="term" value="P:methionyl-tRNA aminoacylation"/>
    <property type="evidence" value="ECO:0007669"/>
    <property type="project" value="UniProtKB-UniRule"/>
</dbReference>
<dbReference type="CDD" id="cd07957">
    <property type="entry name" value="Anticodon_Ia_Met"/>
    <property type="match status" value="1"/>
</dbReference>
<dbReference type="CDD" id="cd00814">
    <property type="entry name" value="MetRS_core"/>
    <property type="match status" value="1"/>
</dbReference>
<dbReference type="CDD" id="cd02800">
    <property type="entry name" value="tRNA_bind_EcMetRS_like"/>
    <property type="match status" value="1"/>
</dbReference>
<dbReference type="FunFam" id="1.10.730.10:FF:000005">
    <property type="entry name" value="Methionine--tRNA ligase"/>
    <property type="match status" value="1"/>
</dbReference>
<dbReference type="FunFam" id="2.20.28.20:FF:000001">
    <property type="entry name" value="Methionine--tRNA ligase"/>
    <property type="match status" value="1"/>
</dbReference>
<dbReference type="FunFam" id="2.40.50.140:FF:000042">
    <property type="entry name" value="Methionine--tRNA ligase"/>
    <property type="match status" value="1"/>
</dbReference>
<dbReference type="Gene3D" id="3.40.50.620">
    <property type="entry name" value="HUPs"/>
    <property type="match status" value="1"/>
</dbReference>
<dbReference type="Gene3D" id="1.10.730.10">
    <property type="entry name" value="Isoleucyl-tRNA Synthetase, Domain 1"/>
    <property type="match status" value="1"/>
</dbReference>
<dbReference type="Gene3D" id="2.20.28.20">
    <property type="entry name" value="Methionyl-tRNA synthetase, Zn-domain"/>
    <property type="match status" value="1"/>
</dbReference>
<dbReference type="Gene3D" id="2.40.50.140">
    <property type="entry name" value="Nucleic acid-binding proteins"/>
    <property type="match status" value="1"/>
</dbReference>
<dbReference type="HAMAP" id="MF_00098">
    <property type="entry name" value="Met_tRNA_synth_type1"/>
    <property type="match status" value="1"/>
</dbReference>
<dbReference type="InterPro" id="IPR001412">
    <property type="entry name" value="aa-tRNA-synth_I_CS"/>
</dbReference>
<dbReference type="InterPro" id="IPR041872">
    <property type="entry name" value="Anticodon_Met"/>
</dbReference>
<dbReference type="InterPro" id="IPR004495">
    <property type="entry name" value="Met-tRNA-synth_bsu_C"/>
</dbReference>
<dbReference type="InterPro" id="IPR023458">
    <property type="entry name" value="Met-tRNA_ligase_1"/>
</dbReference>
<dbReference type="InterPro" id="IPR014758">
    <property type="entry name" value="Met-tRNA_synth"/>
</dbReference>
<dbReference type="InterPro" id="IPR015413">
    <property type="entry name" value="Methionyl/Leucyl_tRNA_Synth"/>
</dbReference>
<dbReference type="InterPro" id="IPR033911">
    <property type="entry name" value="MetRS_core"/>
</dbReference>
<dbReference type="InterPro" id="IPR029038">
    <property type="entry name" value="MetRS_Zn"/>
</dbReference>
<dbReference type="InterPro" id="IPR012340">
    <property type="entry name" value="NA-bd_OB-fold"/>
</dbReference>
<dbReference type="InterPro" id="IPR014729">
    <property type="entry name" value="Rossmann-like_a/b/a_fold"/>
</dbReference>
<dbReference type="InterPro" id="IPR002547">
    <property type="entry name" value="tRNA-bd_dom"/>
</dbReference>
<dbReference type="InterPro" id="IPR009080">
    <property type="entry name" value="tRNAsynth_Ia_anticodon-bd"/>
</dbReference>
<dbReference type="NCBIfam" id="TIGR00398">
    <property type="entry name" value="metG"/>
    <property type="match status" value="1"/>
</dbReference>
<dbReference type="NCBIfam" id="TIGR00399">
    <property type="entry name" value="metG_C_term"/>
    <property type="match status" value="1"/>
</dbReference>
<dbReference type="NCBIfam" id="NF001100">
    <property type="entry name" value="PRK00133.1"/>
    <property type="match status" value="1"/>
</dbReference>
<dbReference type="PANTHER" id="PTHR45765">
    <property type="entry name" value="METHIONINE--TRNA LIGASE"/>
    <property type="match status" value="1"/>
</dbReference>
<dbReference type="PANTHER" id="PTHR45765:SF1">
    <property type="entry name" value="METHIONINE--TRNA LIGASE, CYTOPLASMIC"/>
    <property type="match status" value="1"/>
</dbReference>
<dbReference type="Pfam" id="PF19303">
    <property type="entry name" value="Anticodon_3"/>
    <property type="match status" value="1"/>
</dbReference>
<dbReference type="Pfam" id="PF09334">
    <property type="entry name" value="tRNA-synt_1g"/>
    <property type="match status" value="1"/>
</dbReference>
<dbReference type="Pfam" id="PF01588">
    <property type="entry name" value="tRNA_bind"/>
    <property type="match status" value="1"/>
</dbReference>
<dbReference type="PRINTS" id="PR01041">
    <property type="entry name" value="TRNASYNTHMET"/>
</dbReference>
<dbReference type="SUPFAM" id="SSF47323">
    <property type="entry name" value="Anticodon-binding domain of a subclass of class I aminoacyl-tRNA synthetases"/>
    <property type="match status" value="1"/>
</dbReference>
<dbReference type="SUPFAM" id="SSF57770">
    <property type="entry name" value="Methionyl-tRNA synthetase (MetRS), Zn-domain"/>
    <property type="match status" value="1"/>
</dbReference>
<dbReference type="SUPFAM" id="SSF50249">
    <property type="entry name" value="Nucleic acid-binding proteins"/>
    <property type="match status" value="1"/>
</dbReference>
<dbReference type="SUPFAM" id="SSF52374">
    <property type="entry name" value="Nucleotidylyl transferase"/>
    <property type="match status" value="1"/>
</dbReference>
<dbReference type="PROSITE" id="PS00178">
    <property type="entry name" value="AA_TRNA_LIGASE_I"/>
    <property type="match status" value="1"/>
</dbReference>
<dbReference type="PROSITE" id="PS50886">
    <property type="entry name" value="TRBD"/>
    <property type="match status" value="1"/>
</dbReference>
<evidence type="ECO:0000255" key="1">
    <source>
        <dbReference type="HAMAP-Rule" id="MF_00098"/>
    </source>
</evidence>
<accession>Q6LSZ7</accession>
<organism>
    <name type="scientific">Photobacterium profundum (strain SS9)</name>
    <dbReference type="NCBI Taxonomy" id="298386"/>
    <lineage>
        <taxon>Bacteria</taxon>
        <taxon>Pseudomonadati</taxon>
        <taxon>Pseudomonadota</taxon>
        <taxon>Gammaproteobacteria</taxon>
        <taxon>Vibrionales</taxon>
        <taxon>Vibrionaceae</taxon>
        <taxon>Photobacterium</taxon>
    </lineage>
</organism>
<feature type="chain" id="PRO_0000139151" description="Methionine--tRNA ligase">
    <location>
        <begin position="1"/>
        <end position="680"/>
    </location>
</feature>
<feature type="domain" description="tRNA-binding" evidence="1">
    <location>
        <begin position="579"/>
        <end position="680"/>
    </location>
</feature>
<feature type="short sequence motif" description="'HIGH' region">
    <location>
        <begin position="15"/>
        <end position="25"/>
    </location>
</feature>
<feature type="short sequence motif" description="'KMSKS' region">
    <location>
        <begin position="332"/>
        <end position="336"/>
    </location>
</feature>
<feature type="binding site" evidence="1">
    <location>
        <position position="146"/>
    </location>
    <ligand>
        <name>Zn(2+)</name>
        <dbReference type="ChEBI" id="CHEBI:29105"/>
    </ligand>
</feature>
<feature type="binding site" evidence="1">
    <location>
        <position position="149"/>
    </location>
    <ligand>
        <name>Zn(2+)</name>
        <dbReference type="ChEBI" id="CHEBI:29105"/>
    </ligand>
</feature>
<feature type="binding site" evidence="1">
    <location>
        <position position="159"/>
    </location>
    <ligand>
        <name>Zn(2+)</name>
        <dbReference type="ChEBI" id="CHEBI:29105"/>
    </ligand>
</feature>
<feature type="binding site" evidence="1">
    <location>
        <position position="162"/>
    </location>
    <ligand>
        <name>Zn(2+)</name>
        <dbReference type="ChEBI" id="CHEBI:29105"/>
    </ligand>
</feature>
<feature type="binding site" evidence="1">
    <location>
        <position position="335"/>
    </location>
    <ligand>
        <name>ATP</name>
        <dbReference type="ChEBI" id="CHEBI:30616"/>
    </ligand>
</feature>
<proteinExistence type="inferred from homology"/>